<dbReference type="EC" id="2.1.1.77" evidence="1"/>
<dbReference type="EMBL" id="CP001101">
    <property type="protein sequence ID" value="ACE03328.1"/>
    <property type="molecule type" value="Genomic_DNA"/>
</dbReference>
<dbReference type="SMR" id="B3ELJ9"/>
<dbReference type="STRING" id="331678.Cphamn1_0361"/>
<dbReference type="KEGG" id="cpb:Cphamn1_0361"/>
<dbReference type="eggNOG" id="COG2518">
    <property type="taxonomic scope" value="Bacteria"/>
</dbReference>
<dbReference type="HOGENOM" id="CLU_055432_2_0_10"/>
<dbReference type="OrthoDB" id="9810066at2"/>
<dbReference type="GO" id="GO:0005737">
    <property type="term" value="C:cytoplasm"/>
    <property type="evidence" value="ECO:0007669"/>
    <property type="project" value="UniProtKB-SubCell"/>
</dbReference>
<dbReference type="GO" id="GO:0004719">
    <property type="term" value="F:protein-L-isoaspartate (D-aspartate) O-methyltransferase activity"/>
    <property type="evidence" value="ECO:0007669"/>
    <property type="project" value="UniProtKB-UniRule"/>
</dbReference>
<dbReference type="GO" id="GO:0032259">
    <property type="term" value="P:methylation"/>
    <property type="evidence" value="ECO:0007669"/>
    <property type="project" value="UniProtKB-KW"/>
</dbReference>
<dbReference type="GO" id="GO:0036211">
    <property type="term" value="P:protein modification process"/>
    <property type="evidence" value="ECO:0007669"/>
    <property type="project" value="UniProtKB-UniRule"/>
</dbReference>
<dbReference type="GO" id="GO:0030091">
    <property type="term" value="P:protein repair"/>
    <property type="evidence" value="ECO:0007669"/>
    <property type="project" value="UniProtKB-UniRule"/>
</dbReference>
<dbReference type="FunFam" id="3.40.50.150:FF:000010">
    <property type="entry name" value="Protein-L-isoaspartate O-methyltransferase"/>
    <property type="match status" value="1"/>
</dbReference>
<dbReference type="Gene3D" id="3.40.50.150">
    <property type="entry name" value="Vaccinia Virus protein VP39"/>
    <property type="match status" value="1"/>
</dbReference>
<dbReference type="HAMAP" id="MF_00090">
    <property type="entry name" value="PIMT"/>
    <property type="match status" value="1"/>
</dbReference>
<dbReference type="InterPro" id="IPR000682">
    <property type="entry name" value="PCMT"/>
</dbReference>
<dbReference type="InterPro" id="IPR029063">
    <property type="entry name" value="SAM-dependent_MTases_sf"/>
</dbReference>
<dbReference type="NCBIfam" id="TIGR00080">
    <property type="entry name" value="pimt"/>
    <property type="match status" value="1"/>
</dbReference>
<dbReference type="NCBIfam" id="NF001453">
    <property type="entry name" value="PRK00312.1"/>
    <property type="match status" value="1"/>
</dbReference>
<dbReference type="PANTHER" id="PTHR11579">
    <property type="entry name" value="PROTEIN-L-ISOASPARTATE O-METHYLTRANSFERASE"/>
    <property type="match status" value="1"/>
</dbReference>
<dbReference type="PANTHER" id="PTHR11579:SF0">
    <property type="entry name" value="PROTEIN-L-ISOASPARTATE(D-ASPARTATE) O-METHYLTRANSFERASE"/>
    <property type="match status" value="1"/>
</dbReference>
<dbReference type="Pfam" id="PF01135">
    <property type="entry name" value="PCMT"/>
    <property type="match status" value="1"/>
</dbReference>
<dbReference type="SUPFAM" id="SSF53335">
    <property type="entry name" value="S-adenosyl-L-methionine-dependent methyltransferases"/>
    <property type="match status" value="1"/>
</dbReference>
<dbReference type="PROSITE" id="PS01279">
    <property type="entry name" value="PCMT"/>
    <property type="match status" value="1"/>
</dbReference>
<comment type="function">
    <text evidence="1">Catalyzes the methyl esterification of L-isoaspartyl residues in peptides and proteins that result from spontaneous decomposition of normal L-aspartyl and L-asparaginyl residues. It plays a role in the repair and/or degradation of damaged proteins.</text>
</comment>
<comment type="catalytic activity">
    <reaction evidence="1">
        <text>[protein]-L-isoaspartate + S-adenosyl-L-methionine = [protein]-L-isoaspartate alpha-methyl ester + S-adenosyl-L-homocysteine</text>
        <dbReference type="Rhea" id="RHEA:12705"/>
        <dbReference type="Rhea" id="RHEA-COMP:12143"/>
        <dbReference type="Rhea" id="RHEA-COMP:12144"/>
        <dbReference type="ChEBI" id="CHEBI:57856"/>
        <dbReference type="ChEBI" id="CHEBI:59789"/>
        <dbReference type="ChEBI" id="CHEBI:90596"/>
        <dbReference type="ChEBI" id="CHEBI:90598"/>
        <dbReference type="EC" id="2.1.1.77"/>
    </reaction>
</comment>
<comment type="subcellular location">
    <subcellularLocation>
        <location evidence="1">Cytoplasm</location>
    </subcellularLocation>
</comment>
<comment type="similarity">
    <text evidence="1">Belongs to the methyltransferase superfamily. L-isoaspartyl/D-aspartyl protein methyltransferase family.</text>
</comment>
<feature type="chain" id="PRO_0000351843" description="Protein-L-isoaspartate O-methyltransferase">
    <location>
        <begin position="1"/>
        <end position="220"/>
    </location>
</feature>
<feature type="active site" evidence="1">
    <location>
        <position position="67"/>
    </location>
</feature>
<reference key="1">
    <citation type="submission" date="2008-06" db="EMBL/GenBank/DDBJ databases">
        <title>Complete sequence of Chlorobium phaeobacteroides BS1.</title>
        <authorList>
            <consortium name="US DOE Joint Genome Institute"/>
            <person name="Lucas S."/>
            <person name="Copeland A."/>
            <person name="Lapidus A."/>
            <person name="Glavina del Rio T."/>
            <person name="Dalin E."/>
            <person name="Tice H."/>
            <person name="Bruce D."/>
            <person name="Goodwin L."/>
            <person name="Pitluck S."/>
            <person name="Schmutz J."/>
            <person name="Larimer F."/>
            <person name="Land M."/>
            <person name="Hauser L."/>
            <person name="Kyrpides N."/>
            <person name="Ovchinnikova G."/>
            <person name="Li T."/>
            <person name="Liu Z."/>
            <person name="Zhao F."/>
            <person name="Overmann J."/>
            <person name="Bryant D.A."/>
            <person name="Richardson P."/>
        </authorList>
    </citation>
    <scope>NUCLEOTIDE SEQUENCE [LARGE SCALE GENOMIC DNA]</scope>
    <source>
        <strain>BS1</strain>
    </source>
</reference>
<accession>B3ELJ9</accession>
<protein>
    <recommendedName>
        <fullName evidence="1">Protein-L-isoaspartate O-methyltransferase</fullName>
        <ecNumber evidence="1">2.1.1.77</ecNumber>
    </recommendedName>
    <alternativeName>
        <fullName evidence="1">L-isoaspartyl protein carboxyl methyltransferase</fullName>
    </alternativeName>
    <alternativeName>
        <fullName evidence="1">Protein L-isoaspartyl methyltransferase</fullName>
    </alternativeName>
    <alternativeName>
        <fullName evidence="1">Protein-beta-aspartate methyltransferase</fullName>
        <shortName evidence="1">PIMT</shortName>
    </alternativeName>
</protein>
<keyword id="KW-0963">Cytoplasm</keyword>
<keyword id="KW-0489">Methyltransferase</keyword>
<keyword id="KW-0949">S-adenosyl-L-methionine</keyword>
<keyword id="KW-0808">Transferase</keyword>
<organism>
    <name type="scientific">Chlorobium phaeobacteroides (strain BS1)</name>
    <dbReference type="NCBI Taxonomy" id="331678"/>
    <lineage>
        <taxon>Bacteria</taxon>
        <taxon>Pseudomonadati</taxon>
        <taxon>Chlorobiota</taxon>
        <taxon>Chlorobiia</taxon>
        <taxon>Chlorobiales</taxon>
        <taxon>Chlorobiaceae</taxon>
        <taxon>Chlorobium/Pelodictyon group</taxon>
        <taxon>Chlorobium</taxon>
    </lineage>
</organism>
<name>PIMT_CHLPB</name>
<sequence length="220" mass="24587">MAEQQDARVYSDRRHEMVEQLKRYGITNSKVLEAFNAVERHLFFDAAYRDFAYDDGAFSIGYGQTISQPYTVAYMTSMLVERCPSGKVLEIGTGSGYQAAILEYMGYSVYTVERIEALFRRSSLILGALGLTVHQILGDGTLGWEEEAPYSGIIVTAGAPEPPSALLGQLAEEGVLIIPIGDSTGQRMTVFTRRGEMFQREEFHTFAFVPLIGREGWREE</sequence>
<evidence type="ECO:0000255" key="1">
    <source>
        <dbReference type="HAMAP-Rule" id="MF_00090"/>
    </source>
</evidence>
<gene>
    <name evidence="1" type="primary">pcm</name>
    <name type="ordered locus">Cphamn1_0361</name>
</gene>
<proteinExistence type="inferred from homology"/>